<proteinExistence type="inferred from homology"/>
<comment type="similarity">
    <text evidence="1">Belongs to the bacterial ribosomal protein bL33 family.</text>
</comment>
<dbReference type="EMBL" id="AM295007">
    <property type="protein sequence ID" value="CAM31115.1"/>
    <property type="molecule type" value="Genomic_DNA"/>
</dbReference>
<dbReference type="SMR" id="A2RGY3"/>
<dbReference type="KEGG" id="spf:SpyM51791"/>
<dbReference type="HOGENOM" id="CLU_190949_3_2_9"/>
<dbReference type="GO" id="GO:0005737">
    <property type="term" value="C:cytoplasm"/>
    <property type="evidence" value="ECO:0007669"/>
    <property type="project" value="UniProtKB-ARBA"/>
</dbReference>
<dbReference type="GO" id="GO:1990904">
    <property type="term" value="C:ribonucleoprotein complex"/>
    <property type="evidence" value="ECO:0007669"/>
    <property type="project" value="UniProtKB-KW"/>
</dbReference>
<dbReference type="GO" id="GO:0005840">
    <property type="term" value="C:ribosome"/>
    <property type="evidence" value="ECO:0007669"/>
    <property type="project" value="UniProtKB-KW"/>
</dbReference>
<dbReference type="GO" id="GO:0003735">
    <property type="term" value="F:structural constituent of ribosome"/>
    <property type="evidence" value="ECO:0007669"/>
    <property type="project" value="InterPro"/>
</dbReference>
<dbReference type="GO" id="GO:0006412">
    <property type="term" value="P:translation"/>
    <property type="evidence" value="ECO:0007669"/>
    <property type="project" value="UniProtKB-UniRule"/>
</dbReference>
<dbReference type="Gene3D" id="2.20.28.120">
    <property type="entry name" value="Ribosomal protein L33"/>
    <property type="match status" value="1"/>
</dbReference>
<dbReference type="HAMAP" id="MF_00294">
    <property type="entry name" value="Ribosomal_bL33"/>
    <property type="match status" value="1"/>
</dbReference>
<dbReference type="InterPro" id="IPR001705">
    <property type="entry name" value="Ribosomal_bL33"/>
</dbReference>
<dbReference type="InterPro" id="IPR018264">
    <property type="entry name" value="Ribosomal_bL33_CS"/>
</dbReference>
<dbReference type="InterPro" id="IPR038584">
    <property type="entry name" value="Ribosomal_bL33_sf"/>
</dbReference>
<dbReference type="InterPro" id="IPR011332">
    <property type="entry name" value="Ribosomal_zn-bd"/>
</dbReference>
<dbReference type="NCBIfam" id="NF001764">
    <property type="entry name" value="PRK00504.1"/>
    <property type="match status" value="1"/>
</dbReference>
<dbReference type="NCBIfam" id="NF001860">
    <property type="entry name" value="PRK00595.1"/>
    <property type="match status" value="1"/>
</dbReference>
<dbReference type="NCBIfam" id="TIGR01023">
    <property type="entry name" value="rpmG_bact"/>
    <property type="match status" value="1"/>
</dbReference>
<dbReference type="PANTHER" id="PTHR43168">
    <property type="entry name" value="50S RIBOSOMAL PROTEIN L33, CHLOROPLASTIC"/>
    <property type="match status" value="1"/>
</dbReference>
<dbReference type="PANTHER" id="PTHR43168:SF2">
    <property type="entry name" value="LARGE RIBOSOMAL SUBUNIT PROTEIN BL33C"/>
    <property type="match status" value="1"/>
</dbReference>
<dbReference type="Pfam" id="PF00471">
    <property type="entry name" value="Ribosomal_L33"/>
    <property type="match status" value="1"/>
</dbReference>
<dbReference type="SUPFAM" id="SSF57829">
    <property type="entry name" value="Zn-binding ribosomal proteins"/>
    <property type="match status" value="1"/>
</dbReference>
<dbReference type="PROSITE" id="PS00582">
    <property type="entry name" value="RIBOSOMAL_L33"/>
    <property type="match status" value="1"/>
</dbReference>
<gene>
    <name evidence="1" type="primary">rpmG3</name>
    <name type="ordered locus">SpyM51791</name>
</gene>
<reference key="1">
    <citation type="journal article" date="2007" name="J. Bacteriol.">
        <title>Complete genome of acute rheumatic fever-associated serotype M5 Streptococcus pyogenes strain Manfredo.</title>
        <authorList>
            <person name="Holden M.T.G."/>
            <person name="Scott A."/>
            <person name="Cherevach I."/>
            <person name="Chillingworth T."/>
            <person name="Churcher C."/>
            <person name="Cronin A."/>
            <person name="Dowd L."/>
            <person name="Feltwell T."/>
            <person name="Hamlin N."/>
            <person name="Holroyd S."/>
            <person name="Jagels K."/>
            <person name="Moule S."/>
            <person name="Mungall K."/>
            <person name="Quail M.A."/>
            <person name="Price C."/>
            <person name="Rabbinowitsch E."/>
            <person name="Sharp S."/>
            <person name="Skelton J."/>
            <person name="Whitehead S."/>
            <person name="Barrell B.G."/>
            <person name="Kehoe M."/>
            <person name="Parkhill J."/>
        </authorList>
    </citation>
    <scope>NUCLEOTIDE SEQUENCE [LARGE SCALE GENOMIC DNA]</scope>
    <source>
        <strain>Manfredo</strain>
    </source>
</reference>
<keyword id="KW-0687">Ribonucleoprotein</keyword>
<keyword id="KW-0689">Ribosomal protein</keyword>
<feature type="chain" id="PRO_0000356736" description="Large ribosomal subunit protein bL33C">
    <location>
        <begin position="1"/>
        <end position="49"/>
    </location>
</feature>
<protein>
    <recommendedName>
        <fullName evidence="1">Large ribosomal subunit protein bL33C</fullName>
    </recommendedName>
    <alternativeName>
        <fullName evidence="1">50S ribosomal protein L33 3</fullName>
    </alternativeName>
</protein>
<accession>A2RGY3</accession>
<organism>
    <name type="scientific">Streptococcus pyogenes serotype M5 (strain Manfredo)</name>
    <dbReference type="NCBI Taxonomy" id="160491"/>
    <lineage>
        <taxon>Bacteria</taxon>
        <taxon>Bacillati</taxon>
        <taxon>Bacillota</taxon>
        <taxon>Bacilli</taxon>
        <taxon>Lactobacillales</taxon>
        <taxon>Streptococcaceae</taxon>
        <taxon>Streptococcus</taxon>
    </lineage>
</organism>
<sequence length="49" mass="5913">MRVNITLEHKESGERLYLTSKNKRNTPDRLQLKKYSPKLRKHVTFTEVK</sequence>
<name>RL333_STRPG</name>
<evidence type="ECO:0000255" key="1">
    <source>
        <dbReference type="HAMAP-Rule" id="MF_00294"/>
    </source>
</evidence>